<dbReference type="EC" id="2.7.10.1" evidence="11"/>
<dbReference type="EMBL" id="X70842">
    <property type="protein sequence ID" value="CAA50192.1"/>
    <property type="status" value="ALT_FRAME"/>
    <property type="molecule type" value="mRNA"/>
</dbReference>
<dbReference type="EMBL" id="X59397">
    <property type="protein sequence ID" value="CAA42040.1"/>
    <property type="status" value="ALT_FRAME"/>
    <property type="molecule type" value="mRNA"/>
</dbReference>
<dbReference type="EMBL" id="S53103">
    <property type="protein sequence ID" value="AAB25043.1"/>
    <property type="molecule type" value="mRNA"/>
</dbReference>
<dbReference type="EMBL" id="EU884114">
    <property type="protein sequence ID" value="ACJ66293.1"/>
    <property type="molecule type" value="mRNA"/>
</dbReference>
<dbReference type="EMBL" id="AC124615">
    <property type="status" value="NOT_ANNOTATED_CDS"/>
    <property type="molecule type" value="Genomic_DNA"/>
</dbReference>
<dbReference type="EMBL" id="BC020530">
    <property type="protein sequence ID" value="AAH20530.1"/>
    <property type="molecule type" value="mRNA"/>
</dbReference>
<dbReference type="EMBL" id="AC160723">
    <property type="status" value="NOT_ANNOTATED_CDS"/>
    <property type="molecule type" value="Genomic_DNA"/>
</dbReference>
<dbReference type="EMBL" id="AC134903">
    <property type="status" value="NOT_ANNOTATED_CDS"/>
    <property type="molecule type" value="Genomic_DNA"/>
</dbReference>
<dbReference type="EMBL" id="X89777">
    <property type="protein sequence ID" value="CAA61917.1"/>
    <property type="molecule type" value="Genomic_DNA"/>
</dbReference>
<dbReference type="CCDS" id="CCDS39114.1">
    <molecule id="P35918-1"/>
</dbReference>
<dbReference type="PIR" id="A41228">
    <property type="entry name" value="A41228"/>
</dbReference>
<dbReference type="RefSeq" id="NP_001350145.1">
    <molecule id="P35918-2"/>
    <property type="nucleotide sequence ID" value="NM_001363216.1"/>
</dbReference>
<dbReference type="RefSeq" id="NP_001390070.1">
    <molecule id="P35918-1"/>
    <property type="nucleotide sequence ID" value="NM_001403141.1"/>
</dbReference>
<dbReference type="RefSeq" id="NP_034742.2">
    <molecule id="P35918-1"/>
    <property type="nucleotide sequence ID" value="NM_010612.2"/>
</dbReference>
<dbReference type="SMR" id="P35918"/>
<dbReference type="CORUM" id="P35918"/>
<dbReference type="DIP" id="DIP-215N"/>
<dbReference type="FunCoup" id="P35918">
    <property type="interactions" value="1406"/>
</dbReference>
<dbReference type="IntAct" id="P35918">
    <property type="interactions" value="13"/>
</dbReference>
<dbReference type="MINT" id="P35918"/>
<dbReference type="STRING" id="10090.ENSMUSP00000109144"/>
<dbReference type="BindingDB" id="P35918"/>
<dbReference type="ChEMBL" id="CHEMBL3337"/>
<dbReference type="DrugCentral" id="P35918"/>
<dbReference type="GuidetoPHARMACOLOGY" id="1813"/>
<dbReference type="GlyCosmos" id="P35918">
    <property type="glycosylation" value="17 sites, 11 glycans"/>
</dbReference>
<dbReference type="GlyGen" id="P35918">
    <property type="glycosylation" value="17 sites, 14 N-linked glycans (11 sites)"/>
</dbReference>
<dbReference type="iPTMnet" id="P35918"/>
<dbReference type="PhosphoSitePlus" id="P35918"/>
<dbReference type="PaxDb" id="10090-ENSMUSP00000109144"/>
<dbReference type="ProteomicsDB" id="297595">
    <molecule id="P35918-1"/>
</dbReference>
<dbReference type="ProteomicsDB" id="297596">
    <molecule id="P35918-2"/>
</dbReference>
<dbReference type="ProteomicsDB" id="336554"/>
<dbReference type="ABCD" id="P35918">
    <property type="antibodies" value="30 sequenced antibodies"/>
</dbReference>
<dbReference type="Antibodypedia" id="3413">
    <property type="antibodies" value="3852 antibodies from 55 providers"/>
</dbReference>
<dbReference type="DNASU" id="16542"/>
<dbReference type="Ensembl" id="ENSMUST00000113516.2">
    <molecule id="P35918-1"/>
    <property type="protein sequence ID" value="ENSMUSP00000109144.2"/>
    <property type="gene ID" value="ENSMUSG00000062960.11"/>
</dbReference>
<dbReference type="GeneID" id="16542"/>
<dbReference type="KEGG" id="mmu:16542"/>
<dbReference type="UCSC" id="uc008xul.2">
    <property type="organism name" value="mouse"/>
</dbReference>
<dbReference type="UCSC" id="uc012dxk.2">
    <molecule id="P35918-2"/>
    <property type="organism name" value="mouse"/>
</dbReference>
<dbReference type="AGR" id="MGI:96683"/>
<dbReference type="CTD" id="3791"/>
<dbReference type="MGI" id="MGI:96683">
    <property type="gene designation" value="Kdr"/>
</dbReference>
<dbReference type="VEuPathDB" id="HostDB:ENSMUSG00000062960"/>
<dbReference type="eggNOG" id="KOG0200">
    <property type="taxonomic scope" value="Eukaryota"/>
</dbReference>
<dbReference type="GeneTree" id="ENSGT00940000156710"/>
<dbReference type="HOGENOM" id="CLU_000288_49_4_1"/>
<dbReference type="InParanoid" id="P35918"/>
<dbReference type="OMA" id="FYRDTDM"/>
<dbReference type="OrthoDB" id="9873386at2759"/>
<dbReference type="PhylomeDB" id="P35918"/>
<dbReference type="TreeFam" id="TF325768"/>
<dbReference type="BRENDA" id="2.7.10.1">
    <property type="organism ID" value="3474"/>
</dbReference>
<dbReference type="Reactome" id="R-MMU-194306">
    <property type="pathway name" value="Neurophilin interactions with VEGF and VEGFR"/>
</dbReference>
<dbReference type="Reactome" id="R-MMU-195399">
    <property type="pathway name" value="VEGF binds to VEGFR leading to receptor dimerization"/>
</dbReference>
<dbReference type="Reactome" id="R-MMU-4420097">
    <property type="pathway name" value="VEGFA-VEGFR2 Pathway"/>
</dbReference>
<dbReference type="Reactome" id="R-MMU-5218921">
    <property type="pathway name" value="VEGFR2 mediated cell proliferation"/>
</dbReference>
<dbReference type="BioGRID-ORCS" id="16542">
    <property type="hits" value="1 hit in 82 CRISPR screens"/>
</dbReference>
<dbReference type="ChiTaRS" id="Kdr">
    <property type="organism name" value="mouse"/>
</dbReference>
<dbReference type="PRO" id="PR:P35918"/>
<dbReference type="Proteomes" id="UP000000589">
    <property type="component" value="Chromosome 5"/>
</dbReference>
<dbReference type="RNAct" id="P35918">
    <property type="molecule type" value="protein"/>
</dbReference>
<dbReference type="Bgee" id="ENSMUSG00000062960">
    <property type="expression patterns" value="Expressed in vasculature of trunk and 290 other cell types or tissues"/>
</dbReference>
<dbReference type="GO" id="GO:0070161">
    <property type="term" value="C:anchoring junction"/>
    <property type="evidence" value="ECO:0007669"/>
    <property type="project" value="UniProtKB-SubCell"/>
</dbReference>
<dbReference type="GO" id="GO:0030054">
    <property type="term" value="C:cell junction"/>
    <property type="evidence" value="ECO:0000314"/>
    <property type="project" value="UniProtKB"/>
</dbReference>
<dbReference type="GO" id="GO:0071944">
    <property type="term" value="C:cell periphery"/>
    <property type="evidence" value="ECO:0000314"/>
    <property type="project" value="MGI"/>
</dbReference>
<dbReference type="GO" id="GO:0009986">
    <property type="term" value="C:cell surface"/>
    <property type="evidence" value="ECO:0000314"/>
    <property type="project" value="BHF-UCL"/>
</dbReference>
<dbReference type="GO" id="GO:0005737">
    <property type="term" value="C:cytoplasm"/>
    <property type="evidence" value="ECO:0000314"/>
    <property type="project" value="MGI"/>
</dbReference>
<dbReference type="GO" id="GO:0005769">
    <property type="term" value="C:early endosome"/>
    <property type="evidence" value="ECO:0000314"/>
    <property type="project" value="BHF-UCL"/>
</dbReference>
<dbReference type="GO" id="GO:0005783">
    <property type="term" value="C:endoplasmic reticulum"/>
    <property type="evidence" value="ECO:0000250"/>
    <property type="project" value="UniProtKB"/>
</dbReference>
<dbReference type="GO" id="GO:0009897">
    <property type="term" value="C:external side of plasma membrane"/>
    <property type="evidence" value="ECO:0000314"/>
    <property type="project" value="MGI"/>
</dbReference>
<dbReference type="GO" id="GO:0005576">
    <property type="term" value="C:extracellular region"/>
    <property type="evidence" value="ECO:0007669"/>
    <property type="project" value="UniProtKB-SubCell"/>
</dbReference>
<dbReference type="GO" id="GO:0005794">
    <property type="term" value="C:Golgi apparatus"/>
    <property type="evidence" value="ECO:0007669"/>
    <property type="project" value="Ensembl"/>
</dbReference>
<dbReference type="GO" id="GO:0045121">
    <property type="term" value="C:membrane raft"/>
    <property type="evidence" value="ECO:0007669"/>
    <property type="project" value="Ensembl"/>
</dbReference>
<dbReference type="GO" id="GO:0005634">
    <property type="term" value="C:nucleus"/>
    <property type="evidence" value="ECO:0000314"/>
    <property type="project" value="MGI"/>
</dbReference>
<dbReference type="GO" id="GO:0005886">
    <property type="term" value="C:plasma membrane"/>
    <property type="evidence" value="ECO:0000314"/>
    <property type="project" value="BHF-UCL"/>
</dbReference>
<dbReference type="GO" id="GO:0097443">
    <property type="term" value="C:sorting endosome"/>
    <property type="evidence" value="ECO:0000314"/>
    <property type="project" value="BHF-UCL"/>
</dbReference>
<dbReference type="GO" id="GO:0005524">
    <property type="term" value="F:ATP binding"/>
    <property type="evidence" value="ECO:0007669"/>
    <property type="project" value="UniProtKB-KW"/>
</dbReference>
<dbReference type="GO" id="GO:0045296">
    <property type="term" value="F:cadherin binding"/>
    <property type="evidence" value="ECO:0007669"/>
    <property type="project" value="Ensembl"/>
</dbReference>
<dbReference type="GO" id="GO:0015026">
    <property type="term" value="F:coreceptor activity"/>
    <property type="evidence" value="ECO:0000316"/>
    <property type="project" value="ARUK-UCL"/>
</dbReference>
<dbReference type="GO" id="GO:0019838">
    <property type="term" value="F:growth factor binding"/>
    <property type="evidence" value="ECO:0000353"/>
    <property type="project" value="MGI"/>
</dbReference>
<dbReference type="GO" id="GO:0042802">
    <property type="term" value="F:identical protein binding"/>
    <property type="evidence" value="ECO:0007669"/>
    <property type="project" value="Ensembl"/>
</dbReference>
<dbReference type="GO" id="GO:0005178">
    <property type="term" value="F:integrin binding"/>
    <property type="evidence" value="ECO:0007669"/>
    <property type="project" value="Ensembl"/>
</dbReference>
<dbReference type="GO" id="GO:0038085">
    <property type="term" value="F:vascular endothelial growth factor binding"/>
    <property type="evidence" value="ECO:0007669"/>
    <property type="project" value="Ensembl"/>
</dbReference>
<dbReference type="GO" id="GO:0005021">
    <property type="term" value="F:vascular endothelial growth factor receptor activity"/>
    <property type="evidence" value="ECO:0000314"/>
    <property type="project" value="MGI"/>
</dbReference>
<dbReference type="GO" id="GO:0060837">
    <property type="term" value="P:blood vessel endothelial cell differentiation"/>
    <property type="evidence" value="ECO:0000315"/>
    <property type="project" value="MGI"/>
</dbReference>
<dbReference type="GO" id="GO:0001569">
    <property type="term" value="P:branching involved in blood vessel morphogenesis"/>
    <property type="evidence" value="ECO:0007669"/>
    <property type="project" value="Ensembl"/>
</dbReference>
<dbReference type="GO" id="GO:0048754">
    <property type="term" value="P:branching morphogenesis of an epithelial tube"/>
    <property type="evidence" value="ECO:0000315"/>
    <property type="project" value="MGI"/>
</dbReference>
<dbReference type="GO" id="GO:0055074">
    <property type="term" value="P:calcium ion homeostasis"/>
    <property type="evidence" value="ECO:0000314"/>
    <property type="project" value="MGI"/>
</dbReference>
<dbReference type="GO" id="GO:0045165">
    <property type="term" value="P:cell fate commitment"/>
    <property type="evidence" value="ECO:0000315"/>
    <property type="project" value="MGI"/>
</dbReference>
<dbReference type="GO" id="GO:0016477">
    <property type="term" value="P:cell migration"/>
    <property type="evidence" value="ECO:0000316"/>
    <property type="project" value="MGI"/>
</dbReference>
<dbReference type="GO" id="GO:1904881">
    <property type="term" value="P:cellular response to hydrogen sulfide"/>
    <property type="evidence" value="ECO:0007669"/>
    <property type="project" value="Ensembl"/>
</dbReference>
<dbReference type="GO" id="GO:0035924">
    <property type="term" value="P:cellular response to vascular endothelial growth factor stimulus"/>
    <property type="evidence" value="ECO:0000250"/>
    <property type="project" value="UniProtKB"/>
</dbReference>
<dbReference type="GO" id="GO:0035162">
    <property type="term" value="P:embryonic hemopoiesis"/>
    <property type="evidence" value="ECO:0000315"/>
    <property type="project" value="UniProtKB"/>
</dbReference>
<dbReference type="GO" id="GO:0003157">
    <property type="term" value="P:endocardium development"/>
    <property type="evidence" value="ECO:0000315"/>
    <property type="project" value="UniProtKB"/>
</dbReference>
<dbReference type="GO" id="GO:0045446">
    <property type="term" value="P:endothelial cell differentiation"/>
    <property type="evidence" value="ECO:0000314"/>
    <property type="project" value="MGI"/>
</dbReference>
<dbReference type="GO" id="GO:0003158">
    <property type="term" value="P:endothelium development"/>
    <property type="evidence" value="ECO:0000315"/>
    <property type="project" value="UniProtKB"/>
</dbReference>
<dbReference type="GO" id="GO:0002070">
    <property type="term" value="P:epithelial cell maturation"/>
    <property type="evidence" value="ECO:0000315"/>
    <property type="project" value="MGI"/>
</dbReference>
<dbReference type="GO" id="GO:0050673">
    <property type="term" value="P:epithelial cell proliferation"/>
    <property type="evidence" value="ECO:0000315"/>
    <property type="project" value="MGI"/>
</dbReference>
<dbReference type="GO" id="GO:0030097">
    <property type="term" value="P:hemopoiesis"/>
    <property type="evidence" value="ECO:0000315"/>
    <property type="project" value="MGI"/>
</dbReference>
<dbReference type="GO" id="GO:0048286">
    <property type="term" value="P:lung alveolus development"/>
    <property type="evidence" value="ECO:0000315"/>
    <property type="project" value="MGI"/>
</dbReference>
<dbReference type="GO" id="GO:0030324">
    <property type="term" value="P:lung development"/>
    <property type="evidence" value="ECO:0000315"/>
    <property type="project" value="MGI"/>
</dbReference>
<dbReference type="GO" id="GO:0001945">
    <property type="term" value="P:lymph vessel development"/>
    <property type="evidence" value="ECO:0000316"/>
    <property type="project" value="MGI"/>
</dbReference>
<dbReference type="GO" id="GO:0010463">
    <property type="term" value="P:mesenchymal cell proliferation"/>
    <property type="evidence" value="ECO:0000315"/>
    <property type="project" value="MGI"/>
</dbReference>
<dbReference type="GO" id="GO:2000352">
    <property type="term" value="P:negative regulation of endothelial cell apoptotic process"/>
    <property type="evidence" value="ECO:0000250"/>
    <property type="project" value="UniProtKB"/>
</dbReference>
<dbReference type="GO" id="GO:0010629">
    <property type="term" value="P:negative regulation of gene expression"/>
    <property type="evidence" value="ECO:0007669"/>
    <property type="project" value="Ensembl"/>
</dbReference>
<dbReference type="GO" id="GO:0043524">
    <property type="term" value="P:negative regulation of neuron apoptotic process"/>
    <property type="evidence" value="ECO:0000316"/>
    <property type="project" value="ARUK-UCL"/>
</dbReference>
<dbReference type="GO" id="GO:0001541">
    <property type="term" value="P:ovarian follicle development"/>
    <property type="evidence" value="ECO:0000315"/>
    <property type="project" value="MGI"/>
</dbReference>
<dbReference type="GO" id="GO:0018108">
    <property type="term" value="P:peptidyl-tyrosine phosphorylation"/>
    <property type="evidence" value="ECO:0000250"/>
    <property type="project" value="UniProtKB"/>
</dbReference>
<dbReference type="GO" id="GO:0045766">
    <property type="term" value="P:positive regulation of angiogenesis"/>
    <property type="evidence" value="ECO:0000314"/>
    <property type="project" value="DFLAT"/>
</dbReference>
<dbReference type="GO" id="GO:0030513">
    <property type="term" value="P:positive regulation of BMP signaling pathway"/>
    <property type="evidence" value="ECO:0000314"/>
    <property type="project" value="DFLAT"/>
</dbReference>
<dbReference type="GO" id="GO:0090050">
    <property type="term" value="P:positive regulation of cell migration involved in sprouting angiogenesis"/>
    <property type="evidence" value="ECO:0000315"/>
    <property type="project" value="BHF-UCL"/>
</dbReference>
<dbReference type="GO" id="GO:2001028">
    <property type="term" value="P:positive regulation of endothelial cell chemotaxis"/>
    <property type="evidence" value="ECO:0007669"/>
    <property type="project" value="Ensembl"/>
</dbReference>
<dbReference type="GO" id="GO:0010595">
    <property type="term" value="P:positive regulation of endothelial cell migration"/>
    <property type="evidence" value="ECO:0000304"/>
    <property type="project" value="DFLAT"/>
</dbReference>
<dbReference type="GO" id="GO:0001938">
    <property type="term" value="P:positive regulation of endothelial cell proliferation"/>
    <property type="evidence" value="ECO:0000250"/>
    <property type="project" value="UniProtKB"/>
</dbReference>
<dbReference type="GO" id="GO:0050679">
    <property type="term" value="P:positive regulation of epithelial cell proliferation"/>
    <property type="evidence" value="ECO:0000315"/>
    <property type="project" value="MGI"/>
</dbReference>
<dbReference type="GO" id="GO:0070374">
    <property type="term" value="P:positive regulation of ERK1 and ERK2 cascade"/>
    <property type="evidence" value="ECO:0007669"/>
    <property type="project" value="Ensembl"/>
</dbReference>
<dbReference type="GO" id="GO:0051894">
    <property type="term" value="P:positive regulation of focal adhesion assembly"/>
    <property type="evidence" value="ECO:0007669"/>
    <property type="project" value="Ensembl"/>
</dbReference>
<dbReference type="GO" id="GO:0016239">
    <property type="term" value="P:positive regulation of macroautophagy"/>
    <property type="evidence" value="ECO:0000266"/>
    <property type="project" value="MGI"/>
</dbReference>
<dbReference type="GO" id="GO:0043410">
    <property type="term" value="P:positive regulation of MAPK cascade"/>
    <property type="evidence" value="ECO:0000250"/>
    <property type="project" value="UniProtKB"/>
</dbReference>
<dbReference type="GO" id="GO:0002053">
    <property type="term" value="P:positive regulation of mesenchymal cell proliferation"/>
    <property type="evidence" value="ECO:0000315"/>
    <property type="project" value="MGI"/>
</dbReference>
<dbReference type="GO" id="GO:0051901">
    <property type="term" value="P:positive regulation of mitochondrial depolarization"/>
    <property type="evidence" value="ECO:0000266"/>
    <property type="project" value="MGI"/>
</dbReference>
<dbReference type="GO" id="GO:0090141">
    <property type="term" value="P:positive regulation of mitochondrial fission"/>
    <property type="evidence" value="ECO:0000266"/>
    <property type="project" value="MGI"/>
</dbReference>
<dbReference type="GO" id="GO:0141150">
    <property type="term" value="P:positive regulation of nitric oxide-cGMP mediated signal transduction"/>
    <property type="evidence" value="ECO:0000250"/>
    <property type="project" value="UniProtKB"/>
</dbReference>
<dbReference type="GO" id="GO:0051897">
    <property type="term" value="P:positive regulation of phosphatidylinositol 3-kinase/protein kinase B signal transduction"/>
    <property type="evidence" value="ECO:0000250"/>
    <property type="project" value="UniProtKB"/>
</dbReference>
<dbReference type="GO" id="GO:0050927">
    <property type="term" value="P:positive regulation of positive chemotaxis"/>
    <property type="evidence" value="ECO:0007669"/>
    <property type="project" value="Ensembl"/>
</dbReference>
<dbReference type="GO" id="GO:0001934">
    <property type="term" value="P:positive regulation of protein phosphorylation"/>
    <property type="evidence" value="ECO:0000250"/>
    <property type="project" value="UniProtKB"/>
</dbReference>
<dbReference type="GO" id="GO:2000648">
    <property type="term" value="P:positive regulation of stem cell proliferation"/>
    <property type="evidence" value="ECO:0000315"/>
    <property type="project" value="MGI"/>
</dbReference>
<dbReference type="GO" id="GO:0030949">
    <property type="term" value="P:positive regulation of vascular endothelial growth factor receptor signaling pathway"/>
    <property type="evidence" value="ECO:0000304"/>
    <property type="project" value="DFLAT"/>
</dbReference>
<dbReference type="GO" id="GO:2001214">
    <property type="term" value="P:positive regulation of vasculogenesis"/>
    <property type="evidence" value="ECO:0000315"/>
    <property type="project" value="UniProtKB"/>
</dbReference>
<dbReference type="GO" id="GO:0048597">
    <property type="term" value="P:post-embryonic camera-type eye morphogenesis"/>
    <property type="evidence" value="ECO:0000316"/>
    <property type="project" value="MGI"/>
</dbReference>
<dbReference type="GO" id="GO:0046777">
    <property type="term" value="P:protein autophosphorylation"/>
    <property type="evidence" value="ECO:0000250"/>
    <property type="project" value="UniProtKB"/>
</dbReference>
<dbReference type="GO" id="GO:1903010">
    <property type="term" value="P:regulation of bone development"/>
    <property type="evidence" value="ECO:0000315"/>
    <property type="project" value="MGI"/>
</dbReference>
<dbReference type="GO" id="GO:0008360">
    <property type="term" value="P:regulation of cell shape"/>
    <property type="evidence" value="ECO:0007669"/>
    <property type="project" value="Ensembl"/>
</dbReference>
<dbReference type="GO" id="GO:0001936">
    <property type="term" value="P:regulation of endothelial cell proliferation"/>
    <property type="evidence" value="ECO:0000304"/>
    <property type="project" value="DFLAT"/>
</dbReference>
<dbReference type="GO" id="GO:1901532">
    <property type="term" value="P:regulation of hematopoietic progenitor cell differentiation"/>
    <property type="evidence" value="ECO:0000315"/>
    <property type="project" value="MGI"/>
</dbReference>
<dbReference type="GO" id="GO:0071526">
    <property type="term" value="P:semaphorin-plexin signaling pathway"/>
    <property type="evidence" value="ECO:0000316"/>
    <property type="project" value="ARUK-UCL"/>
</dbReference>
<dbReference type="GO" id="GO:0072089">
    <property type="term" value="P:stem cell proliferation"/>
    <property type="evidence" value="ECO:0000315"/>
    <property type="project" value="MGI"/>
</dbReference>
<dbReference type="GO" id="GO:0043129">
    <property type="term" value="P:surfactant homeostasis"/>
    <property type="evidence" value="ECO:0000315"/>
    <property type="project" value="MGI"/>
</dbReference>
<dbReference type="GO" id="GO:0048010">
    <property type="term" value="P:vascular endothelial growth factor receptor signaling pathway"/>
    <property type="evidence" value="ECO:0000314"/>
    <property type="project" value="MGI"/>
</dbReference>
<dbReference type="GO" id="GO:0036324">
    <property type="term" value="P:vascular endothelial growth factor receptor-2 signaling pathway"/>
    <property type="evidence" value="ECO:0000250"/>
    <property type="project" value="UniProtKB"/>
</dbReference>
<dbReference type="GO" id="GO:0038084">
    <property type="term" value="P:vascular endothelial growth factor signaling pathway"/>
    <property type="evidence" value="ECO:0000314"/>
    <property type="project" value="BHF-UCL"/>
</dbReference>
<dbReference type="GO" id="GO:0061042">
    <property type="term" value="P:vascular wound healing"/>
    <property type="evidence" value="ECO:0007669"/>
    <property type="project" value="Ensembl"/>
</dbReference>
<dbReference type="GO" id="GO:0001570">
    <property type="term" value="P:vasculogenesis"/>
    <property type="evidence" value="ECO:0000315"/>
    <property type="project" value="UniProtKB"/>
</dbReference>
<dbReference type="CDD" id="cd00096">
    <property type="entry name" value="Ig"/>
    <property type="match status" value="2"/>
</dbReference>
<dbReference type="CDD" id="cd05103">
    <property type="entry name" value="PTKc_VEGFR2"/>
    <property type="match status" value="1"/>
</dbReference>
<dbReference type="FunFam" id="1.10.510.10:FF:000077">
    <property type="entry name" value="Vascular endothelial growth factor receptor 2"/>
    <property type="match status" value="1"/>
</dbReference>
<dbReference type="FunFam" id="2.60.40.10:FF:000532">
    <property type="entry name" value="Vascular endothelial growth factor receptor 2"/>
    <property type="match status" value="1"/>
</dbReference>
<dbReference type="FunFam" id="2.60.40.10:FF:000596">
    <property type="entry name" value="Vascular endothelial growth factor receptor 2"/>
    <property type="match status" value="1"/>
</dbReference>
<dbReference type="FunFam" id="2.60.40.10:FF:000669">
    <property type="entry name" value="Vascular endothelial growth factor receptor 2"/>
    <property type="match status" value="1"/>
</dbReference>
<dbReference type="FunFam" id="2.60.40.10:FF:000767">
    <property type="entry name" value="Vascular endothelial growth factor receptor 2"/>
    <property type="match status" value="1"/>
</dbReference>
<dbReference type="FunFam" id="2.60.40.10:FF:000880">
    <property type="entry name" value="Vascular endothelial growth factor receptor 2"/>
    <property type="match status" value="1"/>
</dbReference>
<dbReference type="FunFam" id="3.30.200.20:FF:000041">
    <property type="entry name" value="Vascular endothelial growth factor receptor 2"/>
    <property type="match status" value="1"/>
</dbReference>
<dbReference type="FunFam" id="2.60.40.10:FF:000143">
    <property type="entry name" value="Vascular endothelial growth factor receptor 3"/>
    <property type="match status" value="1"/>
</dbReference>
<dbReference type="FunFam" id="2.60.40.10:FF:000247">
    <property type="entry name" value="Vascular endothelial growth factor receptor 3"/>
    <property type="match status" value="1"/>
</dbReference>
<dbReference type="Gene3D" id="2.60.40.10">
    <property type="entry name" value="Immunoglobulins"/>
    <property type="match status" value="7"/>
</dbReference>
<dbReference type="Gene3D" id="3.30.200.20">
    <property type="entry name" value="Phosphorylase Kinase, domain 1"/>
    <property type="match status" value="1"/>
</dbReference>
<dbReference type="Gene3D" id="1.10.510.10">
    <property type="entry name" value="Transferase(Phosphotransferase) domain 1"/>
    <property type="match status" value="1"/>
</dbReference>
<dbReference type="InterPro" id="IPR007110">
    <property type="entry name" value="Ig-like_dom"/>
</dbReference>
<dbReference type="InterPro" id="IPR036179">
    <property type="entry name" value="Ig-like_dom_sf"/>
</dbReference>
<dbReference type="InterPro" id="IPR013783">
    <property type="entry name" value="Ig-like_fold"/>
</dbReference>
<dbReference type="InterPro" id="IPR013098">
    <property type="entry name" value="Ig_I-set"/>
</dbReference>
<dbReference type="InterPro" id="IPR003599">
    <property type="entry name" value="Ig_sub"/>
</dbReference>
<dbReference type="InterPro" id="IPR003598">
    <property type="entry name" value="Ig_sub2"/>
</dbReference>
<dbReference type="InterPro" id="IPR011009">
    <property type="entry name" value="Kinase-like_dom_sf"/>
</dbReference>
<dbReference type="InterPro" id="IPR000719">
    <property type="entry name" value="Prot_kinase_dom"/>
</dbReference>
<dbReference type="InterPro" id="IPR017441">
    <property type="entry name" value="Protein_kinase_ATP_BS"/>
</dbReference>
<dbReference type="InterPro" id="IPR050122">
    <property type="entry name" value="RTK"/>
</dbReference>
<dbReference type="InterPro" id="IPR001245">
    <property type="entry name" value="Ser-Thr/Tyr_kinase_cat_dom"/>
</dbReference>
<dbReference type="InterPro" id="IPR008266">
    <property type="entry name" value="Tyr_kinase_AS"/>
</dbReference>
<dbReference type="InterPro" id="IPR020635">
    <property type="entry name" value="Tyr_kinase_cat_dom"/>
</dbReference>
<dbReference type="InterPro" id="IPR001824">
    <property type="entry name" value="Tyr_kinase_rcpt_3_CS"/>
</dbReference>
<dbReference type="InterPro" id="IPR041348">
    <property type="entry name" value="VEGFR-2_TMD"/>
</dbReference>
<dbReference type="InterPro" id="IPR055229">
    <property type="entry name" value="VEGFR1-3_5th"/>
</dbReference>
<dbReference type="InterPro" id="IPR055238">
    <property type="entry name" value="VEGFR1-3_N_Ig-like"/>
</dbReference>
<dbReference type="InterPro" id="IPR009136">
    <property type="entry name" value="VEGFR2_rcpt"/>
</dbReference>
<dbReference type="PANTHER" id="PTHR24416">
    <property type="entry name" value="TYROSINE-PROTEIN KINASE RECEPTOR"/>
    <property type="match status" value="1"/>
</dbReference>
<dbReference type="PANTHER" id="PTHR24416:SF45">
    <property type="entry name" value="VASCULAR ENDOTHELIAL GROWTH FACTOR RECEPTOR 2"/>
    <property type="match status" value="1"/>
</dbReference>
<dbReference type="Pfam" id="PF07679">
    <property type="entry name" value="I-set"/>
    <property type="match status" value="2"/>
</dbReference>
<dbReference type="Pfam" id="PF13927">
    <property type="entry name" value="Ig_3"/>
    <property type="match status" value="2"/>
</dbReference>
<dbReference type="Pfam" id="PF22971">
    <property type="entry name" value="Ig_VEGFR-1-like_5th"/>
    <property type="match status" value="1"/>
</dbReference>
<dbReference type="Pfam" id="PF07714">
    <property type="entry name" value="PK_Tyr_Ser-Thr"/>
    <property type="match status" value="1"/>
</dbReference>
<dbReference type="Pfam" id="PF21339">
    <property type="entry name" value="VEGFR-1-like_Ig-like"/>
    <property type="match status" value="1"/>
</dbReference>
<dbReference type="Pfam" id="PF17988">
    <property type="entry name" value="VEGFR-2_TMD"/>
    <property type="match status" value="1"/>
</dbReference>
<dbReference type="Pfam" id="PF22854">
    <property type="entry name" value="VEGFR1-3_N_Ig-like"/>
    <property type="match status" value="1"/>
</dbReference>
<dbReference type="PIRSF" id="PIRSF000615">
    <property type="entry name" value="TyrPK_CSF1-R"/>
    <property type="match status" value="1"/>
</dbReference>
<dbReference type="PRINTS" id="PR01832">
    <property type="entry name" value="VEGFRECEPTOR"/>
</dbReference>
<dbReference type="PRINTS" id="PR01834">
    <property type="entry name" value="VEGFRECEPTR2"/>
</dbReference>
<dbReference type="SMART" id="SM00409">
    <property type="entry name" value="IG"/>
    <property type="match status" value="7"/>
</dbReference>
<dbReference type="SMART" id="SM00408">
    <property type="entry name" value="IGc2"/>
    <property type="match status" value="4"/>
</dbReference>
<dbReference type="SMART" id="SM00219">
    <property type="entry name" value="TyrKc"/>
    <property type="match status" value="1"/>
</dbReference>
<dbReference type="SUPFAM" id="SSF48726">
    <property type="entry name" value="Immunoglobulin"/>
    <property type="match status" value="7"/>
</dbReference>
<dbReference type="SUPFAM" id="SSF56112">
    <property type="entry name" value="Protein kinase-like (PK-like)"/>
    <property type="match status" value="1"/>
</dbReference>
<dbReference type="PROSITE" id="PS50835">
    <property type="entry name" value="IG_LIKE"/>
    <property type="match status" value="5"/>
</dbReference>
<dbReference type="PROSITE" id="PS00107">
    <property type="entry name" value="PROTEIN_KINASE_ATP"/>
    <property type="match status" value="1"/>
</dbReference>
<dbReference type="PROSITE" id="PS50011">
    <property type="entry name" value="PROTEIN_KINASE_DOM"/>
    <property type="match status" value="1"/>
</dbReference>
<dbReference type="PROSITE" id="PS00109">
    <property type="entry name" value="PROTEIN_KINASE_TYR"/>
    <property type="match status" value="1"/>
</dbReference>
<dbReference type="PROSITE" id="PS00240">
    <property type="entry name" value="RECEPTOR_TYR_KIN_III"/>
    <property type="match status" value="1"/>
</dbReference>
<comment type="function">
    <text evidence="9 13 16 17 18 19 20 22">Tyrosine-protein kinase that acts as a cell-surface receptor for VEGFA, VEGFC and VEGFD. Plays an essential role in the regulation of angiogenesis, vascular development, vascular permeability, and embryonic hematopoiesis. Promotes proliferation, survival, migration and differentiation of endothelial cells. Promotes reorganization of the actin cytoskeleton. Isoforms lacking a transmembrane domain, such as isoform 2, may function as decoy receptors for VEGFA, VEGFC and/or VEGFD. Isoform 2 plays an important role as a negative regulator of VEGFA- and VEGFC-mediated lymphangiogenesis by limiting the amount of free VEGFA and/or VEGFC and by preventing their binding to FLT4. Modulates FLT1 and FLT4 signaling by forming heterodimers. Binding of vascular growth factors to isoform 1 leads to the activation of several signaling cascades. Activation of PLCG1 leads to the production of the cellular signaling molecules diacylglycerol and inositol 1,4,5-trisphosphate and the activation of protein kinase C. Mediates activation of MAPK1/ERK2, MAPK3/ERK1 and the MAP kinase signaling pathway, as well as of the AKT1 signaling pathway. Mediates phosphorylation of PIK3R1, the regulatory subunit of phosphatidylinositol 3-kinase, reorganization of the actin cytoskeleton and activation of PTK2/FAK1. Required for VEGFA-mediated induction of NOS2 and NOS3, leading to the production of the signaling molecule nitric oxide (NO) by endothelial cells. Phosphorylates PLCG1. Promotes phosphorylation of FYN, NCK1, NOS3, PIK3R1, PTK2/FAK1 and SRC.</text>
</comment>
<comment type="catalytic activity">
    <reaction evidence="6 11">
        <text>L-tyrosyl-[protein] + ATP = O-phospho-L-tyrosyl-[protein] + ADP + H(+)</text>
        <dbReference type="Rhea" id="RHEA:10596"/>
        <dbReference type="Rhea" id="RHEA-COMP:10136"/>
        <dbReference type="Rhea" id="RHEA-COMP:20101"/>
        <dbReference type="ChEBI" id="CHEBI:15378"/>
        <dbReference type="ChEBI" id="CHEBI:30616"/>
        <dbReference type="ChEBI" id="CHEBI:46858"/>
        <dbReference type="ChEBI" id="CHEBI:61978"/>
        <dbReference type="ChEBI" id="CHEBI:456216"/>
        <dbReference type="EC" id="2.7.10.1"/>
    </reaction>
</comment>
<comment type="activity regulation">
    <text evidence="1">Present in an inactive conformation in the absence of bound ligand. Binding of VEGFA, VEGFC or VEGFD leads to dimerization and activation by autophosphorylation on tyrosine residues. May be regulated by hydrogen sulfide (H(2)S) levels via a sensitive intracellular disulfide bond (By similarity).</text>
</comment>
<comment type="subunit">
    <text evidence="2 10 11 12 13 15 18 21 22">Homodimer in the presence of bound dimeric VEGFA, VEGFC or VEGFD ligands; monomeric in the absence of bound ligands. Can also form heterodimers with FLT1/VEGFR1 and KDR/VEGFR2. Interacts (tyrosine phosphorylated) with LFYN, NCK1, PLCG1. Interacts (tyrosine-phosphorylated active form preferentially) with DAB2IP (via C2 domain and active form preferentially); the interaction occurs at the late phase of VEGFA response and inhibits KDR/VEGFR2 activity. Interacts with SHBSH2D2A/TSAD, GRB2, MYOF, CBL and PDCD6 (PubMed:12796773, PubMed:12881528, PubMed:15026417, PubMed:15673613, PubMed:17702744, PubMed:19668192, PubMed:7681362, PubMed:8356051). Interacts (via C-terminus domain) with ERN1 (via kinase domain); the interaction is facilitated in a XBP1 isoform 1- and vascular endothelial growth factor (VEGF)-dependent manner in endothelial cells (By similarity). Interacts (via juxtamembrane region) with chaperone PDCL3 (via thioredoxin fold region); the interaction leads to increased KDR/VEGFR2 abundance through inhibition of its ubiquitination and degradation (By similarity). Interacts (tyrosine phosphorylated) with CCDC88A/GIV (via SH2-like region); binding requires autophosphorylation of the KDR/VEGFR2 C-terminal region (By similarity). Interacts with isoform 2 of BSG (By similarity). Interacts with SLC31A1; this interaction is induced upon VEGFA stimulation leading to SLC31A1 and KDR subsequent co-internalization to early endosomes, thereby activating KDR downstream signaling in endothelial cells (By similarity).</text>
</comment>
<comment type="interaction">
    <interactant intactId="EBI-1555005">
        <id>P35918</id>
    </interactant>
    <interactant intactId="EBI-7845747">
        <id>P35917</id>
        <label>Flt4</label>
    </interactant>
    <organismsDiffer>false</organismsDiffer>
    <experiments>3</experiments>
</comment>
<comment type="interaction">
    <interactant intactId="EBI-1555005">
        <id>P35918</id>
    </interactant>
    <interactant intactId="EBI-1798780">
        <id>P16056</id>
        <label>Met</label>
    </interactant>
    <organismsDiffer>false</organismsDiffer>
    <experiments>3</experiments>
</comment>
<comment type="interaction">
    <interactant intactId="EBI-1555005">
        <id>P35918</id>
    </interactant>
    <interactant intactId="EBI-1039152">
        <id>P08581</id>
        <label>MET</label>
    </interactant>
    <organismsDiffer>true</organismsDiffer>
    <experiments>3</experiments>
</comment>
<comment type="interaction">
    <interactant intactId="EBI-1555005">
        <id>P35918</id>
    </interactant>
    <interactant intactId="EBI-641237">
        <id>P09619</id>
        <label>PDGFRB</label>
    </interactant>
    <organismsDiffer>true</organismsDiffer>
    <experiments>4</experiments>
</comment>
<comment type="subcellular location">
    <subcellularLocation>
        <location evidence="13 16 18">Cell junction</location>
    </subcellularLocation>
    <subcellularLocation>
        <location evidence="2">Endoplasmic reticulum</location>
    </subcellularLocation>
    <subcellularLocation>
        <location evidence="2">Cell membrane</location>
    </subcellularLocation>
    <text evidence="2">Colocalizes with ERN1 and XBP1 in the endoplasmic reticulum in endothelial cells in a vascular endothelial growth factor (VEGF)-dependent manner (By similarity). Localized with RAP1A at cell-cell junctions.</text>
</comment>
<comment type="subcellular location">
    <molecule>Isoform 1</molecule>
    <subcellularLocation>
        <location>Cell membrane</location>
        <topology>Single-pass type I membrane protein</topology>
    </subcellularLocation>
    <subcellularLocation>
        <location evidence="1">Cytoplasm</location>
    </subcellularLocation>
    <subcellularLocation>
        <location evidence="1">Nucleus</location>
    </subcellularLocation>
    <subcellularLocation>
        <location evidence="1">Cytoplasmic vesicle</location>
    </subcellularLocation>
    <subcellularLocation>
        <location evidence="1">Early endosome</location>
    </subcellularLocation>
    <text evidence="1">Detected on caveolae-enriched lipid rafts at the cell surface. Is recycled from the plasma membrane to endosomes and back again. Phosphorylation triggered by VEGFA binding promotes internalization and subsequent degradation. VEGFA binding triggers internalization and translocation to the nucleus (By similarity).</text>
</comment>
<comment type="subcellular location">
    <molecule>Isoform 2</molecule>
    <subcellularLocation>
        <location>Secreted</location>
    </subcellularLocation>
</comment>
<comment type="alternative products">
    <event type="alternative splicing"/>
    <isoform>
        <id>P35918-1</id>
        <name>1</name>
        <name>mbVegfr-2</name>
        <sequence type="displayed"/>
    </isoform>
    <isoform>
        <id>P35918-2</id>
        <name>2</name>
        <name>sVegfr-2</name>
        <sequence type="described" ref="VSP_041986 VSP_041987"/>
    </isoform>
</comment>
<comment type="tissue specificity">
    <text evidence="14 16 22 23">Expressed in endothelial cells (at protein level). Detected in embryonic endothelial cells, as well as hematopoietic stem and progenitor cells. Detected in vascular endothelium. Expressed at high levels in adult heart, lung, kidney, brain and skeletal muscle, but is also expressed at lower levels in most other adult tissues.</text>
</comment>
<comment type="developmental stage">
    <text evidence="8 16">Expressed in endothelial cells of allantois/umbilical vessels at 8.5 dpc (at protein level). Increases moderately during pregnancy (maximum 2.7-fold at 19 days), and increases further during lactation (maximum 3.7-fold increase on day 7).</text>
</comment>
<comment type="domain">
    <text evidence="1">The second and third Ig-like C2-type (immunoglobulin-like) domains are sufficient for VEGFC binding.</text>
</comment>
<comment type="PTM">
    <text evidence="1">N-glycosylated.</text>
</comment>
<comment type="PTM">
    <text evidence="1">Ubiquitinated. Tyrosine phosphorylation of the receptor promotes its poly-ubiquitination, leading to its degradation via the proteasome or lysosomal proteases (By similarity).</text>
</comment>
<comment type="PTM">
    <text evidence="2">Autophosphorylated on tyrosine residues upon ligand binding. Autophosphorylation occurs in trans, i.e. one subunit of the dimeric receptor phosphorylates tyrosine residues on the other subunit. Phosphorylation at Tyr-949 is important for interaction with SH2D2A/TSAD and VEGFA-mediated reorganization of the actin cytoskeleton. Phosphorylation at Tyr-1173 is important for interaction with PLCG1 and SHB. Phosphorylation at Tyr-1212 is important for interaction with NCK1 and FYN. Dephosphorylated by PTPRJ at Tyr-799, Tyr-949, Tyr-994, Tyr-1052, Tyr-1057, Tyr-1173 and Tyr-1212 (By similarity).</text>
</comment>
<comment type="PTM">
    <text evidence="1">The inhibitory disulfide bond between Cys-1022 and Cys-1043 may serve as a specific molecular switch for H(2)S-induced modification that regulates KDR/VEGFR2 function.</text>
</comment>
<comment type="disruption phenotype">
    <text evidence="20">Embryonic lethality at 8.5 to 9.5 dpc, due to early defects in the development of hematopoietic and endothelial cells, leading to defects in vasculogenesis and endocardium development. At 7.5 dpc, there are no blood islands in the yolk sac. Organized blood vessels are absent in the yolk sac and in the embryo.</text>
</comment>
<comment type="similarity">
    <text evidence="5">Belongs to the protein kinase superfamily. Tyr protein kinase family. CSF-1/PDGF receptor subfamily.</text>
</comment>
<comment type="sequence caution" evidence="25">
    <conflict type="frameshift">
        <sequence resource="EMBL-CDS" id="CAA42040"/>
    </conflict>
</comment>
<comment type="sequence caution" evidence="25">
    <conflict type="frameshift">
        <sequence resource="EMBL-CDS" id="CAA50192"/>
    </conflict>
</comment>
<evidence type="ECO:0000250" key="1"/>
<evidence type="ECO:0000250" key="2">
    <source>
        <dbReference type="UniProtKB" id="P35968"/>
    </source>
</evidence>
<evidence type="ECO:0000255" key="3"/>
<evidence type="ECO:0000255" key="4">
    <source>
        <dbReference type="PROSITE-ProRule" id="PRU00114"/>
    </source>
</evidence>
<evidence type="ECO:0000255" key="5">
    <source>
        <dbReference type="PROSITE-ProRule" id="PRU00159"/>
    </source>
</evidence>
<evidence type="ECO:0000255" key="6">
    <source>
        <dbReference type="PROSITE-ProRule" id="PRU10028"/>
    </source>
</evidence>
<evidence type="ECO:0000256" key="7">
    <source>
        <dbReference type="SAM" id="MobiDB-lite"/>
    </source>
</evidence>
<evidence type="ECO:0000269" key="8">
    <source>
    </source>
</evidence>
<evidence type="ECO:0000269" key="9">
    <source>
    </source>
</evidence>
<evidence type="ECO:0000269" key="10">
    <source>
    </source>
</evidence>
<evidence type="ECO:0000269" key="11">
    <source>
    </source>
</evidence>
<evidence type="ECO:0000269" key="12">
    <source>
    </source>
</evidence>
<evidence type="ECO:0000269" key="13">
    <source>
    </source>
</evidence>
<evidence type="ECO:0000269" key="14">
    <source>
    </source>
</evidence>
<evidence type="ECO:0000269" key="15">
    <source>
    </source>
</evidence>
<evidence type="ECO:0000269" key="16">
    <source>
    </source>
</evidence>
<evidence type="ECO:0000269" key="17">
    <source>
    </source>
</evidence>
<evidence type="ECO:0000269" key="18">
    <source>
    </source>
</evidence>
<evidence type="ECO:0000269" key="19">
    <source>
    </source>
</evidence>
<evidence type="ECO:0000269" key="20">
    <source>
    </source>
</evidence>
<evidence type="ECO:0000269" key="21">
    <source>
    </source>
</evidence>
<evidence type="ECO:0000269" key="22">
    <source>
    </source>
</evidence>
<evidence type="ECO:0000269" key="23">
    <source>
    </source>
</evidence>
<evidence type="ECO:0000303" key="24">
    <source>
    </source>
</evidence>
<evidence type="ECO:0000305" key="25"/>
<evidence type="ECO:0000312" key="26">
    <source>
        <dbReference type="MGI" id="MGI:96683"/>
    </source>
</evidence>
<evidence type="ECO:0007744" key="27">
    <source>
    </source>
</evidence>
<protein>
    <recommendedName>
        <fullName evidence="25">Vascular endothelial growth factor receptor 2</fullName>
        <shortName>VEGFR-2</shortName>
        <ecNumber evidence="11">2.7.10.1</ecNumber>
    </recommendedName>
    <alternativeName>
        <fullName>Fetal liver kinase 1</fullName>
        <shortName>FLK-1</shortName>
    </alternativeName>
    <alternativeName>
        <fullName>Kinase NYK</fullName>
    </alternativeName>
    <alternativeName>
        <fullName>Protein-tyrosine kinase receptor flk-1</fullName>
    </alternativeName>
    <cdAntigenName>CD309</cdAntigenName>
</protein>
<accession>P35918</accession>
<accession>C5H7S5</accession>
<accession>Q8VCD0</accession>
<feature type="signal peptide" evidence="3">
    <location>
        <begin position="1"/>
        <end position="19"/>
    </location>
</feature>
<feature type="chain" id="PRO_0000016772" description="Vascular endothelial growth factor receptor 2">
    <location>
        <begin position="20"/>
        <end position="1345"/>
    </location>
</feature>
<feature type="topological domain" description="Extracellular" evidence="3">
    <location>
        <begin position="20"/>
        <end position="762"/>
    </location>
</feature>
<feature type="transmembrane region" description="Helical" evidence="3">
    <location>
        <begin position="763"/>
        <end position="783"/>
    </location>
</feature>
<feature type="topological domain" description="Cytoplasmic" evidence="3">
    <location>
        <begin position="784"/>
        <end position="1345"/>
    </location>
</feature>
<feature type="domain" description="Ig-like C2-type 1">
    <location>
        <begin position="46"/>
        <end position="111"/>
    </location>
</feature>
<feature type="domain" description="Ig-like C2-type 2">
    <location>
        <begin position="143"/>
        <end position="209"/>
    </location>
</feature>
<feature type="domain" description="Ig-like C2-type 3">
    <location>
        <begin position="226"/>
        <end position="325"/>
    </location>
</feature>
<feature type="domain" description="Ig-like C2-type 4">
    <location>
        <begin position="330"/>
        <end position="416"/>
    </location>
</feature>
<feature type="domain" description="Ig-like C2-type 5">
    <location>
        <begin position="423"/>
        <end position="542"/>
    </location>
</feature>
<feature type="domain" description="Ig-like C2-type 6">
    <location>
        <begin position="549"/>
        <end position="656"/>
    </location>
</feature>
<feature type="domain" description="Ig-like C2-type 7">
    <location>
        <begin position="665"/>
        <end position="751"/>
    </location>
</feature>
<feature type="domain" description="Protein kinase" evidence="5">
    <location>
        <begin position="832"/>
        <end position="1160"/>
    </location>
</feature>
<feature type="region of interest" description="Disordered" evidence="7">
    <location>
        <begin position="1272"/>
        <end position="1316"/>
    </location>
</feature>
<feature type="compositionally biased region" description="Polar residues" evidence="7">
    <location>
        <begin position="1294"/>
        <end position="1307"/>
    </location>
</feature>
<feature type="active site" description="Proton acceptor" evidence="5 6">
    <location>
        <position position="1026"/>
    </location>
</feature>
<feature type="binding site" evidence="5">
    <location>
        <begin position="838"/>
        <end position="846"/>
    </location>
    <ligand>
        <name>ATP</name>
        <dbReference type="ChEBI" id="CHEBI:30616"/>
    </ligand>
</feature>
<feature type="binding site" evidence="5">
    <location>
        <position position="866"/>
    </location>
    <ligand>
        <name>ATP</name>
        <dbReference type="ChEBI" id="CHEBI:30616"/>
    </ligand>
</feature>
<feature type="site" description="Interaction with SHB">
    <location>
        <position position="1173"/>
    </location>
</feature>
<feature type="modified residue" description="Phosphotyrosine" evidence="2">
    <location>
        <position position="799"/>
    </location>
</feature>
<feature type="modified residue" description="Phosphotyrosine; by autocatalysis" evidence="2">
    <location>
        <position position="949"/>
    </location>
</feature>
<feature type="modified residue" description="Phosphoserine" evidence="2">
    <location>
        <position position="980"/>
    </location>
</feature>
<feature type="modified residue" description="Phosphoserine" evidence="2">
    <location>
        <position position="982"/>
    </location>
</feature>
<feature type="modified residue" description="Phosphotyrosine; by autocatalysis" evidence="2">
    <location>
        <position position="994"/>
    </location>
</feature>
<feature type="modified residue" description="Phosphotyrosine; by autocatalysis" evidence="13">
    <location>
        <position position="1052"/>
    </location>
</feature>
<feature type="modified residue" description="Phosphotyrosine; by autocatalysis" evidence="13">
    <location>
        <position position="1057"/>
    </location>
</feature>
<feature type="modified residue" description="Phosphotyrosine; by autocatalysis" evidence="2">
    <location>
        <position position="1173"/>
    </location>
</feature>
<feature type="modified residue" description="Phosphotyrosine; by autocatalysis" evidence="9">
    <location>
        <position position="1212"/>
    </location>
</feature>
<feature type="modified residue" description="Phosphoserine" evidence="27">
    <location>
        <position position="1229"/>
    </location>
</feature>
<feature type="modified residue" description="Phosphoserine" evidence="27">
    <location>
        <position position="1233"/>
    </location>
</feature>
<feature type="modified residue" description="Phosphothreonine" evidence="27">
    <location>
        <position position="1236"/>
    </location>
</feature>
<feature type="modified residue" description="Phosphotyrosine; by autocatalysis" evidence="2">
    <location>
        <position position="1303"/>
    </location>
</feature>
<feature type="modified residue" description="Phosphotyrosine; by autocatalysis" evidence="2">
    <location>
        <position position="1307"/>
    </location>
</feature>
<feature type="modified residue" description="Phosphotyrosine; by autocatalysis" evidence="2">
    <location>
        <position position="1317"/>
    </location>
</feature>
<feature type="glycosylation site" description="N-linked (GlcNAc...) asparagine" evidence="3">
    <location>
        <position position="46"/>
    </location>
</feature>
<feature type="glycosylation site" description="N-linked (GlcNAc...) asparagine" evidence="3">
    <location>
        <position position="98"/>
    </location>
</feature>
<feature type="glycosylation site" description="N-linked (GlcNAc...) asparagine" evidence="3">
    <location>
        <position position="145"/>
    </location>
</feature>
<feature type="glycosylation site" description="N-linked (GlcNAc...) asparagine" evidence="3">
    <location>
        <position position="160"/>
    </location>
</feature>
<feature type="glycosylation site" description="N-linked (GlcNAc...) asparagine" evidence="3">
    <location>
        <position position="247"/>
    </location>
</feature>
<feature type="glycosylation site" description="N-linked (GlcNAc...) asparagine" evidence="3">
    <location>
        <position position="320"/>
    </location>
</feature>
<feature type="glycosylation site" description="N-linked (GlcNAc...) asparagine" evidence="3">
    <location>
        <position position="376"/>
    </location>
</feature>
<feature type="glycosylation site" description="N-linked (GlcNAc...) asparagine" evidence="3">
    <location>
        <position position="397"/>
    </location>
</feature>
<feature type="glycosylation site" description="N-linked (GlcNAc...) asparagine" evidence="3">
    <location>
        <position position="509"/>
    </location>
</feature>
<feature type="glycosylation site" description="N-linked (GlcNAc...) asparagine" evidence="3">
    <location>
        <position position="521"/>
    </location>
</feature>
<feature type="glycosylation site" description="N-linked (GlcNAc...) asparagine" evidence="3">
    <location>
        <position position="578"/>
    </location>
</feature>
<feature type="glycosylation site" description="N-linked (GlcNAc...) asparagine" evidence="3">
    <location>
        <position position="611"/>
    </location>
</feature>
<feature type="glycosylation site" description="N-linked (GlcNAc...) asparagine" evidence="3">
    <location>
        <position position="617"/>
    </location>
</feature>
<feature type="glycosylation site" description="N-linked (GlcNAc...) asparagine" evidence="3">
    <location>
        <position position="629"/>
    </location>
</feature>
<feature type="glycosylation site" description="N-linked (GlcNAc...) asparagine" evidence="3">
    <location>
        <position position="673"/>
    </location>
</feature>
<feature type="glycosylation site" description="N-linked (GlcNAc...) asparagine" evidence="3">
    <location>
        <position position="702"/>
    </location>
</feature>
<feature type="glycosylation site" description="N-linked (GlcNAc...) asparagine" evidence="3">
    <location>
        <position position="719"/>
    </location>
</feature>
<feature type="disulfide bond" evidence="4">
    <location>
        <begin position="53"/>
        <end position="105"/>
    </location>
</feature>
<feature type="disulfide bond" evidence="4">
    <location>
        <begin position="152"/>
        <end position="202"/>
    </location>
</feature>
<feature type="disulfide bond" evidence="4">
    <location>
        <begin position="248"/>
        <end position="309"/>
    </location>
</feature>
<feature type="disulfide bond" evidence="4">
    <location>
        <begin position="447"/>
        <end position="528"/>
    </location>
</feature>
<feature type="disulfide bond" evidence="4">
    <location>
        <begin position="569"/>
        <end position="640"/>
    </location>
</feature>
<feature type="disulfide bond" evidence="4">
    <location>
        <begin position="686"/>
        <end position="735"/>
    </location>
</feature>
<feature type="disulfide bond" description="Redox-active" evidence="4">
    <location>
        <begin position="1022"/>
        <end position="1043"/>
    </location>
</feature>
<feature type="disulfide bond" description="Interchain (with C-189 in SLC31A1)" evidence="2">
    <location>
        <position position="1206"/>
    </location>
</feature>
<feature type="splice variant" id="VSP_041986" description="In isoform 2." evidence="24">
    <original>ERMAPMITGNLEN</original>
    <variation>GMEASLGDRIAMP</variation>
    <location>
        <begin position="661"/>
        <end position="673"/>
    </location>
</feature>
<feature type="splice variant" id="VSP_041987" description="In isoform 2." evidence="24">
    <location>
        <begin position="674"/>
        <end position="1345"/>
    </location>
</feature>
<feature type="mutagenesis site" description="Loss of enzyme activity. Abolishes ubiquitination in response to VEGFA binding." evidence="13">
    <original>K</original>
    <variation>R</variation>
    <location>
        <position position="866"/>
    </location>
</feature>
<feature type="mutagenesis site" description="Loss of interaction with SHB." evidence="12">
    <original>Y</original>
    <variation>F</variation>
    <location>
        <position position="1173"/>
    </location>
</feature>
<feature type="mutagenesis site" description="Strongly reduces internalization and down-regulation of the activated receptor; when associated with A-1191." evidence="13">
    <original>S</original>
    <variation>A</variation>
    <location>
        <position position="1188"/>
    </location>
</feature>
<feature type="mutagenesis site" description="Strongly reduces internalization and down-regulation of the activated receptor; when associated with A-1188." evidence="13">
    <original>S</original>
    <variation>A</variation>
    <location>
        <position position="1191"/>
    </location>
</feature>
<feature type="mutagenesis site" description="Strongly reduced autophosphorylation." evidence="9">
    <original>Y</original>
    <variation>F</variation>
    <location>
        <position position="1212"/>
    </location>
</feature>
<feature type="sequence conflict" description="In Ref. 1; CAA50192." evidence="25" ref="1">
    <original>P</original>
    <variation>T</variation>
    <location>
        <position position="25"/>
    </location>
</feature>
<feature type="sequence conflict" description="In Ref. 3; AAB25043." evidence="25" ref="3">
    <original>G</original>
    <variation>D</variation>
    <location>
        <position position="679"/>
    </location>
</feature>
<feature type="sequence conflict" description="In Ref. 2; CAA42040 and 3; AAB25043." evidence="25" ref="2 3">
    <original>VL</original>
    <variation>LV</variation>
    <location>
        <begin position="783"/>
        <end position="784"/>
    </location>
</feature>
<feature type="sequence conflict" description="In Ref. 2; CAA42040 and 3; AAB25043." evidence="25" ref="2 3">
    <original>C</original>
    <variation>S</variation>
    <location>
        <position position="917"/>
    </location>
</feature>
<proteinExistence type="evidence at protein level"/>
<reference key="1">
    <citation type="journal article" date="1993" name="Cell">
        <title>High affinity VEGF binding and developmental expression suggest Flk-1 as a major regulator of vasculogenesis and angiogenesis.</title>
        <authorList>
            <person name="Millauer B."/>
            <person name="Wizigmann-Voos S."/>
            <person name="Schnurch H."/>
            <person name="Martinez R."/>
            <person name="Mueller N.P.H."/>
            <person name="Risau W."/>
            <person name="Ullrich A."/>
        </authorList>
    </citation>
    <scope>NUCLEOTIDE SEQUENCE [MRNA] (ISOFORM 1)</scope>
    <scope>INTERACTION WITH VEGFA</scope>
    <source>
        <strain>BALB/cJ</strain>
        <tissue>Embryo</tissue>
    </source>
</reference>
<reference key="2">
    <citation type="journal article" date="1991" name="Proc. Natl. Acad. Sci. U.S.A.">
        <title>A receptor tyrosine kinase cDNA isolated from a population of enriched primitive hematopoietic cells and exhibiting close genetic linkage to c-kit.</title>
        <authorList>
            <person name="Mathews W."/>
            <person name="Jordan C.T."/>
            <person name="Gavin M."/>
            <person name="Jenkins N.A."/>
            <person name="Copeland N.G."/>
            <person name="Lemishcka I.R."/>
        </authorList>
    </citation>
    <scope>NUCLEOTIDE SEQUENCE [MRNA] (ISOFORM 1)</scope>
    <scope>TISSUE SPECIFICITY</scope>
    <source>
        <strain>C3H/He</strain>
        <tissue>Fetal liver</tissue>
    </source>
</reference>
<reference key="3">
    <citation type="journal article" date="1993" name="Oncogene">
        <title>NYK/FLK-1: a putative receptor protein tyrosine kinase isolated from E10 embryonic neuroepithelium is expressed in endothelial cells of the developing embryo.</title>
        <authorList>
            <person name="Oelrichs R.B."/>
            <person name="Reid H.H."/>
            <person name="Bernard O."/>
            <person name="Ziemiecki A."/>
            <person name="Wilks A.F."/>
        </authorList>
    </citation>
    <scope>NUCLEOTIDE SEQUENCE [MRNA] (ISOFORM 1)</scope>
    <scope>TISSUE SPECIFICITY</scope>
</reference>
<reference key="4">
    <citation type="journal article" date="2009" name="Nat. Med.">
        <title>Alternatively spliced vascular endothelial growth factor receptor-2 is an essential endogenous inhibitor of lymphatic vessel growth.</title>
        <authorList>
            <person name="Albuquerque R.J."/>
            <person name="Hayashi T."/>
            <person name="Cho W.G."/>
            <person name="Kleinman M.E."/>
            <person name="Dridi S."/>
            <person name="Takeda A."/>
            <person name="Baffi J.Z."/>
            <person name="Yamada K."/>
            <person name="Kaneko H."/>
            <person name="Green M.G."/>
            <person name="Chappell J."/>
            <person name="Wilting J."/>
            <person name="Weich H.A."/>
            <person name="Yamagami S."/>
            <person name="Amano S."/>
            <person name="Mizuki N."/>
            <person name="Alexander J.S."/>
            <person name="Peterson M.L."/>
            <person name="Brekken R.A."/>
            <person name="Hirashima M."/>
            <person name="Capoor S."/>
            <person name="Usui T."/>
            <person name="Ambati B.K."/>
            <person name="Ambati J."/>
        </authorList>
    </citation>
    <scope>NUCLEOTIDE SEQUENCE [MRNA] (ISOFORM 2)</scope>
    <scope>INTERACTION WITH VEGFC</scope>
    <scope>FUNCTION IN INHIBITING VEGFC SIGNALING</scope>
    <scope>SUBCELLULAR LOCATION</scope>
    <source>
        <strain>C57BL/6J</strain>
    </source>
</reference>
<reference key="5">
    <citation type="journal article" date="2009" name="PLoS Biol.">
        <title>Lineage-specific biology revealed by a finished genome assembly of the mouse.</title>
        <authorList>
            <person name="Church D.M."/>
            <person name="Goodstadt L."/>
            <person name="Hillier L.W."/>
            <person name="Zody M.C."/>
            <person name="Goldstein S."/>
            <person name="She X."/>
            <person name="Bult C.J."/>
            <person name="Agarwala R."/>
            <person name="Cherry J.L."/>
            <person name="DiCuccio M."/>
            <person name="Hlavina W."/>
            <person name="Kapustin Y."/>
            <person name="Meric P."/>
            <person name="Maglott D."/>
            <person name="Birtle Z."/>
            <person name="Marques A.C."/>
            <person name="Graves T."/>
            <person name="Zhou S."/>
            <person name="Teague B."/>
            <person name="Potamousis K."/>
            <person name="Churas C."/>
            <person name="Place M."/>
            <person name="Herschleb J."/>
            <person name="Runnheim R."/>
            <person name="Forrest D."/>
            <person name="Amos-Landgraf J."/>
            <person name="Schwartz D.C."/>
            <person name="Cheng Z."/>
            <person name="Lindblad-Toh K."/>
            <person name="Eichler E.E."/>
            <person name="Ponting C.P."/>
        </authorList>
    </citation>
    <scope>NUCLEOTIDE SEQUENCE [LARGE SCALE GENOMIC DNA]</scope>
    <source>
        <strain>C57BL/6J</strain>
    </source>
</reference>
<reference key="6">
    <citation type="journal article" date="2004" name="Genome Res.">
        <title>The status, quality, and expansion of the NIH full-length cDNA project: the Mammalian Gene Collection (MGC).</title>
        <authorList>
            <consortium name="The MGC Project Team"/>
        </authorList>
    </citation>
    <scope>NUCLEOTIDE SEQUENCE [LARGE SCALE MRNA]</scope>
    <source>
        <strain>FVB/N</strain>
        <tissue>Kidney</tissue>
    </source>
</reference>
<reference key="7">
    <citation type="journal article" date="1995" name="J. Biol. Chem.">
        <title>Cloning and functional analysis of the promoter for KDR/flk-1, a receptor for vascular endothelial growth factor.</title>
        <authorList>
            <person name="Patterson C."/>
            <person name="Perrella M.A."/>
            <person name="Hsieh C.-M."/>
            <person name="Yoshizumi M."/>
            <person name="Lee M.-E."/>
            <person name="Harber E."/>
        </authorList>
    </citation>
    <scope>NUCLEOTIDE SEQUENCE [GENOMIC DNA] OF 1-15</scope>
</reference>
<reference key="8">
    <citation type="journal article" date="1993" name="Proc. Natl. Acad. Sci. U.S.A.">
        <title>Fetal liver kinase 1 is a receptor for vascular endothelial growth factor and is selectively expressed in vascular endothelium.</title>
        <authorList>
            <person name="Quinn T.P."/>
            <person name="Peters K.G."/>
            <person name="de Vries C."/>
            <person name="Ferrara N."/>
            <person name="Williams L.T."/>
        </authorList>
    </citation>
    <scope>FUNCTION</scope>
    <scope>INTERACTION WITH VEGFA</scope>
    <scope>AUTOPHOSPHORYLATION</scope>
    <scope>TISSUE SPECIFICITY</scope>
</reference>
<reference key="9">
    <citation type="journal article" date="1995" name="Nature">
        <title>Failure of blood-island formation and vasculogenesis in Flk-1-deficient mice.</title>
        <authorList>
            <person name="Shalaby F."/>
            <person name="Rossant J."/>
            <person name="Yamaguchi T.P."/>
            <person name="Gertsenstein M."/>
            <person name="Wu X.F."/>
            <person name="Breitman M.L."/>
            <person name="Schuh A.C."/>
        </authorList>
    </citation>
    <scope>DISRUPTION PHENOTYPE</scope>
    <scope>FUNCTION</scope>
</reference>
<reference key="10">
    <citation type="journal article" date="2000" name="Dev. Dyn.">
        <title>Regulation of VEGF and VEGF receptor expression in the rodent mammary gland during pregnancy, lactation, and involution.</title>
        <authorList>
            <person name="Pepper M.S."/>
            <person name="Baetens D."/>
            <person name="Mandriota S.J."/>
            <person name="Di Sanza C."/>
            <person name="Oikemus S."/>
            <person name="Lane T.F."/>
            <person name="Soriano J.V."/>
            <person name="Montesano R."/>
            <person name="Iruela-Arispe M.L."/>
        </authorList>
    </citation>
    <scope>DEVELOPMENTAL STAGE</scope>
</reference>
<reference key="11">
    <citation type="journal article" date="2002" name="J. Biol. Chem.">
        <title>The presence of a single tyrosine residue at the carboxyl domain of vascular endothelial growth factor receptor-2/FLK-1 regulates its autophosphorylation and activation of signaling molecules.</title>
        <authorList>
            <person name="Meyer R.D."/>
            <person name="Dayanir V."/>
            <person name="Majnoun F."/>
            <person name="Rahimi N."/>
        </authorList>
    </citation>
    <scope>FUNCTION</scope>
    <scope>PHOSPHORYLATION AT TYR-1212</scope>
    <scope>MUTAGENESIS OF TYR-1212</scope>
</reference>
<reference key="12">
    <citation type="journal article" date="2003" name="J. Biol. Chem.">
        <title>Ligand-induced vascular endothelial growth factor receptor-3 (VEGFR-3) heterodimerization with VEGFR-2 in primary lymphatic endothelial cells regulates tyrosine phosphorylation sites.</title>
        <authorList>
            <person name="Dixelius J."/>
            <person name="Makinen T."/>
            <person name="Wirzenius M."/>
            <person name="Karkkainen M.J."/>
            <person name="Wernstedt C."/>
            <person name="Alitalo K."/>
            <person name="Claesson-Welsh L."/>
        </authorList>
    </citation>
    <scope>INTERACTION WITH FLT4</scope>
    <scope>CATALYTIC ACTIVITY</scope>
</reference>
<reference key="13">
    <citation type="journal article" date="2003" name="Nat. Med.">
        <title>Role of PlGF in the intra- and intermolecular cross talk between the VEGF receptors Flt1 and Flk1.</title>
        <authorList>
            <person name="Autiero M."/>
            <person name="Waltenberger J."/>
            <person name="Communi D."/>
            <person name="Kranz A."/>
            <person name="Moons L."/>
            <person name="Lambrechts D."/>
            <person name="Kroll J."/>
            <person name="Plaisance S."/>
            <person name="De Mol M."/>
            <person name="Bono F."/>
            <person name="Kliche S."/>
            <person name="Fellbrich G."/>
            <person name="Ballmer-Hofer K."/>
            <person name="Maglione D."/>
            <person name="Mayr-Beyrle U."/>
            <person name="Dewerchin M."/>
            <person name="Dombrowski S."/>
            <person name="Stanimirovic D."/>
            <person name="Van Hummelen P."/>
            <person name="Dehio C."/>
            <person name="Hicklin D.J."/>
            <person name="Persico G."/>
            <person name="Herbert J.M."/>
            <person name="Communi D."/>
            <person name="Shibuya M."/>
            <person name="Collen D."/>
            <person name="Conway E.M."/>
            <person name="Carmeliet P."/>
        </authorList>
    </citation>
    <scope>INTERACTION WITH FLT1</scope>
</reference>
<reference key="14">
    <citation type="journal article" date="2004" name="J. Biol. Chem.">
        <title>The adaptor protein shb binds to tyrosine 1175 in vascular endothelial growth factor (VEGF) receptor-2 and regulates VEGF-dependent cellular migration.</title>
        <authorList>
            <person name="Holmqvist K."/>
            <person name="Cross M.J."/>
            <person name="Rolny C."/>
            <person name="Haegerkvist R."/>
            <person name="Rahimi N."/>
            <person name="Matsumoto T."/>
            <person name="Claesson-Welsh L."/>
            <person name="Welsh M."/>
        </authorList>
    </citation>
    <scope>INTERACTION WITH SHB</scope>
    <scope>MUTAGENESIS OF TYR-1173</scope>
</reference>
<reference key="15">
    <citation type="journal article" date="2005" name="Mol. Biol. Cell">
        <title>The carboxyl terminus of VEGFR-2 is required for PKC-mediated down-regulation.</title>
        <authorList>
            <person name="Singh A.J."/>
            <person name="Meyer R.D."/>
            <person name="Band H."/>
            <person name="Rahimi N."/>
        </authorList>
    </citation>
    <scope>FUNCTION</scope>
    <scope>INTERACTION WITH CBL</scope>
    <scope>UBIQUITINATION</scope>
    <scope>PHOSPHORYLATION AT TYR-1052 AND TYR-1057</scope>
    <scope>MUTAGENESIS OF LYS-866; SER-1188 AND SER-1191</scope>
    <scope>SUBCELLULAR LOCATION</scope>
</reference>
<reference key="16">
    <citation type="journal article" date="2007" name="J. Biol. Chem.">
        <title>Myoferlin regulates vascular endothelial growth factor receptor-2 stability and function.</title>
        <authorList>
            <person name="Bernatchez P.N."/>
            <person name="Acevedo L."/>
            <person name="Fernandez-Hernando C."/>
            <person name="Murata T."/>
            <person name="Chalouni C."/>
            <person name="Kim J."/>
            <person name="Erdjument-Bromage H."/>
            <person name="Shah V."/>
            <person name="Gratton J.-P."/>
            <person name="McNally E.M."/>
            <person name="Tempst P."/>
            <person name="Sessa W.C."/>
        </authorList>
    </citation>
    <scope>INTERACTION WITH MYOF</scope>
</reference>
<reference key="17">
    <citation type="journal article" date="2009" name="Biochem. Biophys. Res. Commun.">
        <title>Impaired vascular development in the yolk sac and allantois in mice lacking RA-GEF-1.</title>
        <authorList>
            <person name="Kanemura H."/>
            <person name="Satoh T."/>
            <person name="Bilasy S.E."/>
            <person name="Ueda S."/>
            <person name="Hirashima M."/>
            <person name="Kataoka T."/>
        </authorList>
    </citation>
    <scope>FUNCTION</scope>
    <scope>SUBCELLULAR LOCATION</scope>
    <scope>TISSUE SPECIFICITY</scope>
    <scope>DEVELOPMENTAL STAGE</scope>
</reference>
<reference key="18">
    <citation type="journal article" date="2009" name="Hypertension">
        <title>Vascular endothelial growth factor receptor 2 controls blood pressure by regulating nitric oxide synthase expression.</title>
        <authorList>
            <person name="Facemire C.S."/>
            <person name="Nixon A.B."/>
            <person name="Griffiths R."/>
            <person name="Hurwitz H."/>
            <person name="Coffman T.M."/>
        </authorList>
    </citation>
    <scope>FUNCTION</scope>
</reference>
<reference key="19">
    <citation type="journal article" date="2010" name="Cell">
        <title>A tissue-specific atlas of mouse protein phosphorylation and expression.</title>
        <authorList>
            <person name="Huttlin E.L."/>
            <person name="Jedrychowski M.P."/>
            <person name="Elias J.E."/>
            <person name="Goswami T."/>
            <person name="Rad R."/>
            <person name="Beausoleil S.A."/>
            <person name="Villen J."/>
            <person name="Haas W."/>
            <person name="Sowa M.E."/>
            <person name="Gygi S.P."/>
        </authorList>
    </citation>
    <scope>PHOSPHORYLATION [LARGE SCALE ANALYSIS] AT SER-1229; SER-1233 AND THR-1236</scope>
    <scope>IDENTIFICATION BY MASS SPECTROMETRY [LARGE SCALE ANALYSIS]</scope>
    <source>
        <tissue>Brown adipose tissue</tissue>
        <tissue>Heart</tissue>
        <tissue>Kidney</tissue>
        <tissue>Lung</tissue>
    </source>
</reference>
<reference key="20">
    <citation type="journal article" date="2011" name="Blood">
        <title>Blood vessel endothelial VEGFR-2 delays lymphangiogenesis: an endogenous trapping mechanism links lymph- and angiogenesis.</title>
        <authorList>
            <person name="Nakao S."/>
            <person name="Zandi S."/>
            <person name="Hata Y."/>
            <person name="Kawahara S."/>
            <person name="Arita R."/>
            <person name="Schering A."/>
            <person name="Sun D."/>
            <person name="Melhorn M.I."/>
            <person name="Ito Y."/>
            <person name="Lara-Castillo N."/>
            <person name="Ishibashi T."/>
            <person name="Hafezi-Moghadam A."/>
        </authorList>
    </citation>
    <scope>FUNCTION</scope>
</reference>
<organism>
    <name type="scientific">Mus musculus</name>
    <name type="common">Mouse</name>
    <dbReference type="NCBI Taxonomy" id="10090"/>
    <lineage>
        <taxon>Eukaryota</taxon>
        <taxon>Metazoa</taxon>
        <taxon>Chordata</taxon>
        <taxon>Craniata</taxon>
        <taxon>Vertebrata</taxon>
        <taxon>Euteleostomi</taxon>
        <taxon>Mammalia</taxon>
        <taxon>Eutheria</taxon>
        <taxon>Euarchontoglires</taxon>
        <taxon>Glires</taxon>
        <taxon>Rodentia</taxon>
        <taxon>Myomorpha</taxon>
        <taxon>Muroidea</taxon>
        <taxon>Muridae</taxon>
        <taxon>Murinae</taxon>
        <taxon>Mus</taxon>
        <taxon>Mus</taxon>
    </lineage>
</organism>
<keyword id="KW-0025">Alternative splicing</keyword>
<keyword id="KW-0037">Angiogenesis</keyword>
<keyword id="KW-0067">ATP-binding</keyword>
<keyword id="KW-0965">Cell junction</keyword>
<keyword id="KW-1003">Cell membrane</keyword>
<keyword id="KW-0963">Cytoplasm</keyword>
<keyword id="KW-0968">Cytoplasmic vesicle</keyword>
<keyword id="KW-0217">Developmental protein</keyword>
<keyword id="KW-0221">Differentiation</keyword>
<keyword id="KW-1015">Disulfide bond</keyword>
<keyword id="KW-0256">Endoplasmic reticulum</keyword>
<keyword id="KW-0967">Endosome</keyword>
<keyword id="KW-0325">Glycoprotein</keyword>
<keyword id="KW-0393">Immunoglobulin domain</keyword>
<keyword id="KW-0418">Kinase</keyword>
<keyword id="KW-0472">Membrane</keyword>
<keyword id="KW-0547">Nucleotide-binding</keyword>
<keyword id="KW-0539">Nucleus</keyword>
<keyword id="KW-0597">Phosphoprotein</keyword>
<keyword id="KW-0675">Receptor</keyword>
<keyword id="KW-1185">Reference proteome</keyword>
<keyword id="KW-0677">Repeat</keyword>
<keyword id="KW-0964">Secreted</keyword>
<keyword id="KW-0732">Signal</keyword>
<keyword id="KW-0808">Transferase</keyword>
<keyword id="KW-0812">Transmembrane</keyword>
<keyword id="KW-1133">Transmembrane helix</keyword>
<keyword id="KW-0829">Tyrosine-protein kinase</keyword>
<keyword id="KW-0832">Ubl conjugation</keyword>
<name>VGFR2_MOUSE</name>
<gene>
    <name evidence="26" type="primary">Kdr</name>
    <name type="synonym">Flk-1</name>
    <name type="synonym">Flk1</name>
</gene>
<sequence>MESKALLAVALWFCVETRAASVGLPGDFLHPPKLSTQKDILTILANTTLQITCRGQRDLDWLWPNAQRDSEERVLVTECGGGDSIFCKTLTIPRVVGNDTGAYKCSYRDVDIASTVYVYVRDYRSPFIASVSDQHGIVYITENKNKTVVIPCRGSISNLNVSLCARYPEKRFVPDGNRISWDSEIGFTLPSYMISYAGMVFCEAKINDETYQSIMYIVVVVGYRIYDVILSPPHEIELSAGEKLVLNCTARTELNVGLDFTWHSPPSKSHHKKIVNRDVKPFPGTVAKMFLSTLTIESVTKSDQGEYTCVASSGRMIKRNRTFVRVHTKPFIAFGSGMKSLVEATVGSQVRIPVKYLSYPAPDIKWYRNGRPIESNYTMIVGDELTIMEVTERDAGNYTVILTNPISMEKQSHMVSLVVNVPPQIGEKALISPMDSYQYGTMQTLTCTVYANPPLHHIQWYWQLEEACSYRPGQTSPYACKEWRHVEDFQGGNKIEVTKNQYALIEGKNKTVSTLVIQAANVSALYKCEAINKAGRGERVISFHVIRGPEITVQPAAQPTEQESVSLLCTADRNTFENLTWYKLGSQATSVHMGESLTPVCKNLDALWKLNGTMFSNSTNDILIVAFQNASLQDQGDYVCSAQDKKTKKRHCLVKQLIILERMAPMITGNLENQTTTIGETIEVTCPASGNPTPHITWFKDNETLVEDSGIVLRDGNRNLTIRRVRKEDGGLYTCQACNVLGCARAETLFIIEGAQEKTNLEVIILVGTAVIAMFFWLLLVIVLRTVKRANEGELKTGYLSIVMDPDELPLDERCERLPYDASKWEFPRDRLKLGKPLGRGAFGQVIEADAFGIDKTATCKTVAVKMLKEGATHSEHRALMSELKILIHIGHHLNVVNLLGACTKPGGPLMVIVEFCKFGNLSTYLRGKRNEFVPYKSKGARFRQGKDYVGELSVDLKRRLDSITSSQSSASSGFVEEKSLSDVEEEEASEELYKDFLTLEHLICYSFQVAKGMEFLASRKCIHRDLAARNILLSEKNVVKICDFGLARDIYKDPDYVRKGDARLPLKWMAPETIFDRVYTIQSDVWSFGVLLWEIFSLGASPYPGVKIDEEFCRRLKEGTRMRAPDYTTPEMYQTMLDCWHEDPNQRPSFSELVEHLGNLLQANAQQDGKDYIVLPMSETLSMEEDSGLSLPTSPVSCMEEEEVCDPKFHYDNTAGISHYLQNSKRKSRPVSVKTFEDIPLEEPEVKVIPDDSQTDSGMVLASEELKTLEDRNKLSPSFGGMMPSKSRESVASEGSNQTSGYQSGYHSDDTDTTVYSSDEAGLLKMVDAAVHADSGTTLRSPPV</sequence>